<gene>
    <name evidence="1" type="primary">RBCS2</name>
    <name evidence="3" type="synonym">SSU26</name>
</gene>
<organism>
    <name type="scientific">Lemna gibba</name>
    <name type="common">Swollen duckweed</name>
    <dbReference type="NCBI Taxonomy" id="4470"/>
    <lineage>
        <taxon>Eukaryota</taxon>
        <taxon>Viridiplantae</taxon>
        <taxon>Streptophyta</taxon>
        <taxon>Embryophyta</taxon>
        <taxon>Tracheophyta</taxon>
        <taxon>Spermatophyta</taxon>
        <taxon>Magnoliopsida</taxon>
        <taxon>Liliopsida</taxon>
        <taxon>Araceae</taxon>
        <taxon>Lemnoideae</taxon>
        <taxon>Lemna</taxon>
    </lineage>
</organism>
<keyword id="KW-0113">Calvin cycle</keyword>
<keyword id="KW-0120">Carbon dioxide fixation</keyword>
<keyword id="KW-0150">Chloroplast</keyword>
<keyword id="KW-0601">Photorespiration</keyword>
<keyword id="KW-0602">Photosynthesis</keyword>
<keyword id="KW-0934">Plastid</keyword>
<keyword id="KW-0809">Transit peptide</keyword>
<feature type="transit peptide" description="Chloroplast" evidence="1">
    <location>
        <begin position="1"/>
        <end position="56"/>
    </location>
</feature>
<feature type="chain" id="PRO_0000031513" description="Ribulose bisphosphate carboxylase small subunit, chloroplastic 2" evidence="1">
    <location>
        <begin position="57"/>
        <end position="177"/>
    </location>
</feature>
<name>RBS2_LEMGI</name>
<accession>P19308</accession>
<dbReference type="EMBL" id="X17232">
    <property type="protein sequence ID" value="CAA35101.1"/>
    <property type="molecule type" value="Genomic_DNA"/>
</dbReference>
<dbReference type="PIR" id="S11680">
    <property type="entry name" value="RKDWS6"/>
</dbReference>
<dbReference type="SMR" id="P19308"/>
<dbReference type="GO" id="GO:0009507">
    <property type="term" value="C:chloroplast"/>
    <property type="evidence" value="ECO:0007669"/>
    <property type="project" value="UniProtKB-SubCell"/>
</dbReference>
<dbReference type="GO" id="GO:0016984">
    <property type="term" value="F:ribulose-bisphosphate carboxylase activity"/>
    <property type="evidence" value="ECO:0007669"/>
    <property type="project" value="UniProtKB-UniRule"/>
</dbReference>
<dbReference type="GO" id="GO:0009853">
    <property type="term" value="P:photorespiration"/>
    <property type="evidence" value="ECO:0007669"/>
    <property type="project" value="UniProtKB-KW"/>
</dbReference>
<dbReference type="GO" id="GO:0019253">
    <property type="term" value="P:reductive pentose-phosphate cycle"/>
    <property type="evidence" value="ECO:0007669"/>
    <property type="project" value="UniProtKB-UniRule"/>
</dbReference>
<dbReference type="CDD" id="cd03527">
    <property type="entry name" value="RuBisCO_small"/>
    <property type="match status" value="1"/>
</dbReference>
<dbReference type="FunFam" id="3.30.190.10:FF:000001">
    <property type="entry name" value="Ribulose bisphosphate carboxylase small chain, chloroplastic"/>
    <property type="match status" value="1"/>
</dbReference>
<dbReference type="Gene3D" id="3.30.190.10">
    <property type="entry name" value="Ribulose bisphosphate carboxylase, small subunit"/>
    <property type="match status" value="1"/>
</dbReference>
<dbReference type="HAMAP" id="MF_00859">
    <property type="entry name" value="RuBisCO_S_bact"/>
    <property type="match status" value="1"/>
</dbReference>
<dbReference type="InterPro" id="IPR024681">
    <property type="entry name" value="RuBisCO_ssu"/>
</dbReference>
<dbReference type="InterPro" id="IPR000894">
    <property type="entry name" value="RuBisCO_ssu_dom"/>
</dbReference>
<dbReference type="InterPro" id="IPR024680">
    <property type="entry name" value="RuBisCO_ssu_N"/>
</dbReference>
<dbReference type="InterPro" id="IPR036385">
    <property type="entry name" value="RuBisCO_ssu_sf"/>
</dbReference>
<dbReference type="PANTHER" id="PTHR31262">
    <property type="entry name" value="RIBULOSE BISPHOSPHATE CARBOXYLASE SMALL CHAIN 1, CHLOROPLASTIC"/>
    <property type="match status" value="1"/>
</dbReference>
<dbReference type="PANTHER" id="PTHR31262:SF10">
    <property type="entry name" value="RIBULOSE BISPHOSPHATE CARBOXYLASE SMALL SUBUNIT 1A, CHLOROPLASTIC-RELATED"/>
    <property type="match status" value="1"/>
</dbReference>
<dbReference type="Pfam" id="PF12338">
    <property type="entry name" value="RbcS"/>
    <property type="match status" value="1"/>
</dbReference>
<dbReference type="Pfam" id="PF00101">
    <property type="entry name" value="RuBisCO_small"/>
    <property type="match status" value="1"/>
</dbReference>
<dbReference type="PRINTS" id="PR00152">
    <property type="entry name" value="RUBISCOSMALL"/>
</dbReference>
<dbReference type="SMART" id="SM00961">
    <property type="entry name" value="RuBisCO_small"/>
    <property type="match status" value="1"/>
</dbReference>
<dbReference type="SUPFAM" id="SSF55239">
    <property type="entry name" value="RuBisCO, small subunit"/>
    <property type="match status" value="1"/>
</dbReference>
<protein>
    <recommendedName>
        <fullName evidence="1">Ribulose bisphosphate carboxylase small subunit, chloroplastic 2</fullName>
        <shortName evidence="1">RuBisCO small subunit 2</shortName>
        <shortName evidence="3">RuBisCO small subunit SSU26</shortName>
    </recommendedName>
</protein>
<proteinExistence type="evidence at transcript level"/>
<reference key="1">
    <citation type="journal article" date="1990" name="Plant Mol. Biol.">
        <title>Differential expression of individual genes encoding the small subunit of ribulose-1,5-bisphosphate carboxylase in Lemna gibba.</title>
        <authorList>
            <person name="Silverthorne J."/>
            <person name="Wimpee C.F."/>
            <person name="Yamada T."/>
            <person name="Rolfe S.A."/>
            <person name="Tobin E.M."/>
        </authorList>
    </citation>
    <scope>NUCLEOTIDE SEQUENCE [GENOMIC DNA]</scope>
    <scope>INDUCTION</scope>
</reference>
<evidence type="ECO:0000255" key="1">
    <source>
        <dbReference type="HAMAP-Rule" id="MF_00860"/>
    </source>
</evidence>
<evidence type="ECO:0000269" key="2">
    <source>
    </source>
</evidence>
<evidence type="ECO:0000303" key="3">
    <source>
    </source>
</evidence>
<comment type="function">
    <text evidence="1">RuBisCO catalyzes two reactions: the carboxylation of D-ribulose 1,5-bisphosphate, the primary event in carbon dioxide fixation, as well as the oxidative fragmentation of the pentose substrate. Both reactions occur simultaneously and in competition at the same active site. Although the small subunit is not catalytic it is essential for maximal activity.</text>
</comment>
<comment type="subunit">
    <text evidence="1">Heterohexadecamer of 8 large and 8 small subunits.</text>
</comment>
<comment type="subcellular location">
    <subcellularLocation>
        <location evidence="1">Plastid</location>
        <location evidence="1">Chloroplast</location>
    </subcellularLocation>
</comment>
<comment type="induction">
    <text evidence="2">Accumulates to low levels when grown under continuous white light.</text>
</comment>
<comment type="miscellaneous">
    <text>This protein is coded by one member of a small multigene family.</text>
</comment>
<comment type="miscellaneous">
    <text evidence="1">The basic functional RuBisCO is composed of a large chain homodimer in a 'head-to-tail' conformation. In form I RuBisCO this homodimer is arranged in a barrel-like tetramer with the small subunits forming a tetrameric 'cap' on each end of the 'barrel'.</text>
</comment>
<comment type="similarity">
    <text evidence="1">Belongs to the RuBisCO small chain family.</text>
</comment>
<sequence length="177" mass="19815">MASSMMASTAAVARAGPAQSNMVAPFNGLRSSVAFPATRKANKNLSTLPSNGGKVSCMQVWPPEGLKKFETLSYLPPLSVEDLAKEVDYLLRNDWVPCIEFSKEGFVYRENHASPGYYDGRYWTMWKLPMFGCTDASQVIAEVEEAKKAYPEYFVRIIGFDNKRQVQCISFIAYKPT</sequence>